<keyword id="KW-1048">Host nucleus</keyword>
<keyword id="KW-1185">Reference proteome</keyword>
<proteinExistence type="inferred from homology"/>
<evidence type="ECO:0000250" key="1">
    <source>
        <dbReference type="UniProtKB" id="P0DKA0"/>
    </source>
</evidence>
<evidence type="ECO:0000256" key="2">
    <source>
        <dbReference type="SAM" id="MobiDB-lite"/>
    </source>
</evidence>
<evidence type="ECO:0000305" key="3"/>
<dbReference type="EMBL" id="M17463">
    <property type="status" value="NOT_ANNOTATED_CDS"/>
    <property type="molecule type" value="Genomic_DNA"/>
</dbReference>
<dbReference type="SMR" id="P0DOD3"/>
<dbReference type="Proteomes" id="UP000009252">
    <property type="component" value="Genome"/>
</dbReference>
<dbReference type="GO" id="GO:0042025">
    <property type="term" value="C:host cell nucleus"/>
    <property type="evidence" value="ECO:0007669"/>
    <property type="project" value="UniProtKB-SubCell"/>
</dbReference>
<dbReference type="GO" id="GO:0003677">
    <property type="term" value="F:DNA binding"/>
    <property type="evidence" value="ECO:0007669"/>
    <property type="project" value="InterPro"/>
</dbReference>
<dbReference type="GO" id="GO:0003700">
    <property type="term" value="F:DNA-binding transcription factor activity"/>
    <property type="evidence" value="ECO:0007669"/>
    <property type="project" value="InterPro"/>
</dbReference>
<dbReference type="GO" id="GO:0006275">
    <property type="term" value="P:regulation of DNA replication"/>
    <property type="evidence" value="ECO:0007669"/>
    <property type="project" value="InterPro"/>
</dbReference>
<dbReference type="Gene3D" id="3.30.70.330">
    <property type="match status" value="1"/>
</dbReference>
<dbReference type="InterPro" id="IPR035975">
    <property type="entry name" value="E2/EBNA1_C_sf"/>
</dbReference>
<dbReference type="InterPro" id="IPR012677">
    <property type="entry name" value="Nucleotide-bd_a/b_plait_sf"/>
</dbReference>
<dbReference type="InterPro" id="IPR000427">
    <property type="entry name" value="Papillomavirus_E2_C"/>
</dbReference>
<dbReference type="Pfam" id="PF00511">
    <property type="entry name" value="PPV_E2_C"/>
    <property type="match status" value="1"/>
</dbReference>
<dbReference type="SUPFAM" id="SSF54957">
    <property type="entry name" value="Viral DNA-binding domain"/>
    <property type="match status" value="1"/>
</dbReference>
<reference key="1">
    <citation type="journal article" date="1987" name="Virology">
        <title>Nucleotide sequence and genome organization of human papillomavirus type 5.</title>
        <authorList>
            <person name="Zachow K.R."/>
            <person name="Ostrow R.S."/>
            <person name="Faras A.J."/>
        </authorList>
    </citation>
    <scope>NUCLEOTIDE SEQUENCE [GENOMIC DNA]</scope>
</reference>
<feature type="chain" id="PRO_0000438758" description="Protein E8^E2C">
    <location>
        <begin position="1"/>
        <end position="323"/>
    </location>
</feature>
<feature type="region of interest" description="Disordered" evidence="2">
    <location>
        <begin position="1"/>
        <end position="233"/>
    </location>
</feature>
<feature type="compositionally biased region" description="Low complexity" evidence="2">
    <location>
        <begin position="20"/>
        <end position="40"/>
    </location>
</feature>
<feature type="compositionally biased region" description="Polar residues" evidence="2">
    <location>
        <begin position="41"/>
        <end position="53"/>
    </location>
</feature>
<feature type="compositionally biased region" description="Basic residues" evidence="2">
    <location>
        <begin position="57"/>
        <end position="93"/>
    </location>
</feature>
<feature type="compositionally biased region" description="Low complexity" evidence="2">
    <location>
        <begin position="94"/>
        <end position="130"/>
    </location>
</feature>
<feature type="compositionally biased region" description="Basic residues" evidence="2">
    <location>
        <begin position="132"/>
        <end position="142"/>
    </location>
</feature>
<feature type="compositionally biased region" description="Low complexity" evidence="2">
    <location>
        <begin position="143"/>
        <end position="155"/>
    </location>
</feature>
<accession>P0DOD3</accession>
<comment type="function">
    <text evidence="1">Plays a role in limiting the replication of viral DNA in keratinocytes. Recruits the host NCoR/SMRT complex to viral replication foci to mediate repression of both viral replication and transcription.</text>
</comment>
<comment type="subcellular location">
    <subcellularLocation>
        <location evidence="1">Host nucleus</location>
    </subcellularLocation>
</comment>
<comment type="similarity">
    <text evidence="3">Belongs to the papillomaviridae E8^E2C protein family.</text>
</comment>
<protein>
    <recommendedName>
        <fullName>Protein E8^E2C</fullName>
    </recommendedName>
</protein>
<name>VE8E2_HPV05</name>
<organismHost>
    <name type="scientific">Homo sapiens</name>
    <name type="common">Human</name>
    <dbReference type="NCBI Taxonomy" id="9606"/>
</organismHost>
<organism>
    <name type="scientific">Human papillomavirus 5</name>
    <dbReference type="NCBI Taxonomy" id="333923"/>
    <lineage>
        <taxon>Viruses</taxon>
        <taxon>Monodnaviria</taxon>
        <taxon>Shotokuvirae</taxon>
        <taxon>Cossaviricota</taxon>
        <taxon>Papovaviricetes</taxon>
        <taxon>Zurhausenvirales</taxon>
        <taxon>Papillomaviridae</taxon>
        <taxon>Firstpapillomavirinae</taxon>
        <taxon>Betapapillomavirus</taxon>
        <taxon>Betapapillomavirus 1</taxon>
    </lineage>
</organism>
<sequence length="323" mass="35515">MKLKMLLLSSTPPGSPGGQADTNTTPATPTTSTTAVDSTSRQLTTSKQPQQTETRGRRYGRRPSSKSRRSQTQQRRSRSRHRSRSRSRSRSKSQTHTTRSTTRSRSTSLTKTRALTSRSRSRGRSPTTCRRGGGRSPRRRSRSPSTSSSCTTQRSQRARAESSTTRGARGSRGSRGGSRGGRGRRRGRSSSSSSPAHKRSRGGSAKLRGVSPGEVGGSLRSVSSKHTGRLGRLLEEARDPPVIIVKGAANTLKCFRNRAKIKYMGLFRSFSTTWSWVAGDGTERLGRPRMLISFSSYTQRRDFDEAVRYPKGVDKAYGNLDSL</sequence>